<organism>
    <name type="scientific">Yersinia pseudotuberculosis serotype O:1b (strain IP 31758)</name>
    <dbReference type="NCBI Taxonomy" id="349747"/>
    <lineage>
        <taxon>Bacteria</taxon>
        <taxon>Pseudomonadati</taxon>
        <taxon>Pseudomonadota</taxon>
        <taxon>Gammaproteobacteria</taxon>
        <taxon>Enterobacterales</taxon>
        <taxon>Yersiniaceae</taxon>
        <taxon>Yersinia</taxon>
    </lineage>
</organism>
<accession>A7FM87</accession>
<protein>
    <recommendedName>
        <fullName evidence="1">3-isopropylmalate dehydratase small subunit</fullName>
        <ecNumber evidence="1">4.2.1.33</ecNumber>
    </recommendedName>
    <alternativeName>
        <fullName evidence="1">Alpha-IPM isomerase</fullName>
        <shortName evidence="1">IPMI</shortName>
    </alternativeName>
    <alternativeName>
        <fullName evidence="1">Isopropylmalate isomerase</fullName>
    </alternativeName>
</protein>
<dbReference type="EC" id="4.2.1.33" evidence="1"/>
<dbReference type="EMBL" id="CP000720">
    <property type="protein sequence ID" value="ABS49705.1"/>
    <property type="molecule type" value="Genomic_DNA"/>
</dbReference>
<dbReference type="RefSeq" id="WP_012105677.1">
    <property type="nucleotide sequence ID" value="NC_009708.1"/>
</dbReference>
<dbReference type="SMR" id="A7FM87"/>
<dbReference type="KEGG" id="ypi:YpsIP31758_3408"/>
<dbReference type="HOGENOM" id="CLU_081378_0_3_6"/>
<dbReference type="UniPathway" id="UPA00048">
    <property type="reaction ID" value="UER00071"/>
</dbReference>
<dbReference type="Proteomes" id="UP000002412">
    <property type="component" value="Chromosome"/>
</dbReference>
<dbReference type="GO" id="GO:0009316">
    <property type="term" value="C:3-isopropylmalate dehydratase complex"/>
    <property type="evidence" value="ECO:0007669"/>
    <property type="project" value="InterPro"/>
</dbReference>
<dbReference type="GO" id="GO:0003861">
    <property type="term" value="F:3-isopropylmalate dehydratase activity"/>
    <property type="evidence" value="ECO:0007669"/>
    <property type="project" value="UniProtKB-UniRule"/>
</dbReference>
<dbReference type="GO" id="GO:0009098">
    <property type="term" value="P:L-leucine biosynthetic process"/>
    <property type="evidence" value="ECO:0007669"/>
    <property type="project" value="UniProtKB-UniRule"/>
</dbReference>
<dbReference type="CDD" id="cd01577">
    <property type="entry name" value="IPMI_Swivel"/>
    <property type="match status" value="1"/>
</dbReference>
<dbReference type="FunFam" id="3.20.19.10:FF:000003">
    <property type="entry name" value="3-isopropylmalate dehydratase small subunit"/>
    <property type="match status" value="1"/>
</dbReference>
<dbReference type="Gene3D" id="3.20.19.10">
    <property type="entry name" value="Aconitase, domain 4"/>
    <property type="match status" value="1"/>
</dbReference>
<dbReference type="HAMAP" id="MF_01031">
    <property type="entry name" value="LeuD_type1"/>
    <property type="match status" value="1"/>
</dbReference>
<dbReference type="InterPro" id="IPR004431">
    <property type="entry name" value="3-IsopropMal_deHydase_ssu"/>
</dbReference>
<dbReference type="InterPro" id="IPR015928">
    <property type="entry name" value="Aconitase/3IPM_dehydase_swvl"/>
</dbReference>
<dbReference type="InterPro" id="IPR000573">
    <property type="entry name" value="AconitaseA/IPMdHydase_ssu_swvl"/>
</dbReference>
<dbReference type="InterPro" id="IPR033940">
    <property type="entry name" value="IPMI_Swivel"/>
</dbReference>
<dbReference type="InterPro" id="IPR050075">
    <property type="entry name" value="LeuD"/>
</dbReference>
<dbReference type="NCBIfam" id="TIGR00171">
    <property type="entry name" value="leuD"/>
    <property type="match status" value="1"/>
</dbReference>
<dbReference type="NCBIfam" id="NF002458">
    <property type="entry name" value="PRK01641.1"/>
    <property type="match status" value="1"/>
</dbReference>
<dbReference type="PANTHER" id="PTHR43345:SF5">
    <property type="entry name" value="3-ISOPROPYLMALATE DEHYDRATASE SMALL SUBUNIT"/>
    <property type="match status" value="1"/>
</dbReference>
<dbReference type="PANTHER" id="PTHR43345">
    <property type="entry name" value="3-ISOPROPYLMALATE DEHYDRATASE SMALL SUBUNIT 2-RELATED-RELATED"/>
    <property type="match status" value="1"/>
</dbReference>
<dbReference type="Pfam" id="PF00694">
    <property type="entry name" value="Aconitase_C"/>
    <property type="match status" value="1"/>
</dbReference>
<dbReference type="SUPFAM" id="SSF52016">
    <property type="entry name" value="LeuD/IlvD-like"/>
    <property type="match status" value="1"/>
</dbReference>
<evidence type="ECO:0000255" key="1">
    <source>
        <dbReference type="HAMAP-Rule" id="MF_01031"/>
    </source>
</evidence>
<sequence>MAKFIQHIGLVAPLDAANVDTDAIIPKQFLQKVTRTGFGQHLFNDWRFLDDAGKVPNPDFVLNLPRYQGATILLARENFGCGSSREHAPWALTDFGFKVVIAPSFADIFYGNAFNNQLLPVTLSEADVDTLFQLVKENEGIEFVVDLEQQTVNAGGKSYAFEIDPFRRHCMINGLDSIGLTLQHEHNISAYEKQQPEFLR</sequence>
<keyword id="KW-0028">Amino-acid biosynthesis</keyword>
<keyword id="KW-0100">Branched-chain amino acid biosynthesis</keyword>
<keyword id="KW-0432">Leucine biosynthesis</keyword>
<keyword id="KW-0456">Lyase</keyword>
<reference key="1">
    <citation type="journal article" date="2007" name="PLoS Genet.">
        <title>The complete genome sequence of Yersinia pseudotuberculosis IP31758, the causative agent of Far East scarlet-like fever.</title>
        <authorList>
            <person name="Eppinger M."/>
            <person name="Rosovitz M.J."/>
            <person name="Fricke W.F."/>
            <person name="Rasko D.A."/>
            <person name="Kokorina G."/>
            <person name="Fayolle C."/>
            <person name="Lindler L.E."/>
            <person name="Carniel E."/>
            <person name="Ravel J."/>
        </authorList>
    </citation>
    <scope>NUCLEOTIDE SEQUENCE [LARGE SCALE GENOMIC DNA]</scope>
    <source>
        <strain>IP 31758</strain>
    </source>
</reference>
<feature type="chain" id="PRO_1000063858" description="3-isopropylmalate dehydratase small subunit">
    <location>
        <begin position="1"/>
        <end position="200"/>
    </location>
</feature>
<comment type="function">
    <text evidence="1">Catalyzes the isomerization between 2-isopropylmalate and 3-isopropylmalate, via the formation of 2-isopropylmaleate.</text>
</comment>
<comment type="catalytic activity">
    <reaction evidence="1">
        <text>(2R,3S)-3-isopropylmalate = (2S)-2-isopropylmalate</text>
        <dbReference type="Rhea" id="RHEA:32287"/>
        <dbReference type="ChEBI" id="CHEBI:1178"/>
        <dbReference type="ChEBI" id="CHEBI:35121"/>
        <dbReference type="EC" id="4.2.1.33"/>
    </reaction>
</comment>
<comment type="pathway">
    <text evidence="1">Amino-acid biosynthesis; L-leucine biosynthesis; L-leucine from 3-methyl-2-oxobutanoate: step 2/4.</text>
</comment>
<comment type="subunit">
    <text evidence="1">Heterodimer of LeuC and LeuD.</text>
</comment>
<comment type="similarity">
    <text evidence="1">Belongs to the LeuD family. LeuD type 1 subfamily.</text>
</comment>
<gene>
    <name evidence="1" type="primary">leuD</name>
    <name type="ordered locus">YpsIP31758_3408</name>
</gene>
<proteinExistence type="inferred from homology"/>
<name>LEUD_YERP3</name>